<dbReference type="EMBL" id="X05181">
    <property type="protein sequence ID" value="CAA28816.1"/>
    <property type="molecule type" value="mRNA"/>
</dbReference>
<dbReference type="SMR" id="P13831"/>
<dbReference type="GlyCosmos" id="P13831">
    <property type="glycosylation" value="3 sites, No reported glycans"/>
</dbReference>
<dbReference type="GO" id="GO:0005886">
    <property type="term" value="C:plasma membrane"/>
    <property type="evidence" value="ECO:0007669"/>
    <property type="project" value="UniProtKB-SubCell"/>
</dbReference>
<dbReference type="CDD" id="cd06257">
    <property type="entry name" value="DnaJ"/>
    <property type="match status" value="1"/>
</dbReference>
<dbReference type="Gene3D" id="1.10.287.110">
    <property type="entry name" value="DnaJ domain"/>
    <property type="match status" value="1"/>
</dbReference>
<dbReference type="Gene3D" id="6.10.280.180">
    <property type="entry name" value="Plasmodium RESA, N-terminal helical domain"/>
    <property type="match status" value="1"/>
</dbReference>
<dbReference type="InterPro" id="IPR001623">
    <property type="entry name" value="DnaJ_domain"/>
</dbReference>
<dbReference type="InterPro" id="IPR018253">
    <property type="entry name" value="DnaJ_domain_CS"/>
</dbReference>
<dbReference type="InterPro" id="IPR026894">
    <property type="entry name" value="DnaJ_X"/>
</dbReference>
<dbReference type="InterPro" id="IPR052423">
    <property type="entry name" value="EMIR"/>
</dbReference>
<dbReference type="InterPro" id="IPR036869">
    <property type="entry name" value="J_dom_sf"/>
</dbReference>
<dbReference type="InterPro" id="IPR019111">
    <property type="entry name" value="PRESA_N"/>
</dbReference>
<dbReference type="InterPro" id="IPR044885">
    <property type="entry name" value="PRESA_N_sf"/>
</dbReference>
<dbReference type="PANTHER" id="PTHR44094">
    <property type="entry name" value="DNAJ HEAT SHOCK N-TERMINAL DOMAIN-CONTAINING PROTEIN"/>
    <property type="match status" value="1"/>
</dbReference>
<dbReference type="PANTHER" id="PTHR44094:SF8">
    <property type="entry name" value="DNAJ HEAT SHOCK N-TERMINAL DOMAIN-CONTAINING PROTEIN-RELATED"/>
    <property type="match status" value="1"/>
</dbReference>
<dbReference type="Pfam" id="PF00226">
    <property type="entry name" value="DnaJ"/>
    <property type="match status" value="1"/>
</dbReference>
<dbReference type="Pfam" id="PF14308">
    <property type="entry name" value="DnaJ-X"/>
    <property type="match status" value="1"/>
</dbReference>
<dbReference type="Pfam" id="PF09687">
    <property type="entry name" value="PRESAN"/>
    <property type="match status" value="1"/>
</dbReference>
<dbReference type="PRINTS" id="PR00625">
    <property type="entry name" value="JDOMAIN"/>
</dbReference>
<dbReference type="SMART" id="SM00271">
    <property type="entry name" value="DnaJ"/>
    <property type="match status" value="1"/>
</dbReference>
<dbReference type="SUPFAM" id="SSF46565">
    <property type="entry name" value="Chaperone J-domain"/>
    <property type="match status" value="1"/>
</dbReference>
<dbReference type="PROSITE" id="PS00636">
    <property type="entry name" value="DNAJ_1"/>
    <property type="match status" value="1"/>
</dbReference>
<dbReference type="PROSITE" id="PS50076">
    <property type="entry name" value="DNAJ_2"/>
    <property type="match status" value="1"/>
</dbReference>
<reference key="1">
    <citation type="journal article" date="1984" name="Mol. Biol. Med.">
        <title>The ring-infected erythrocyte surface antigen (RESA) polypeptide of Plasmodium falciparum contains two separate blocks of tandem repeats encoding antigenic epitopes that are naturally immunogenic in man.</title>
        <authorList>
            <person name="Cowman A.F."/>
            <person name="Coppel R.L."/>
            <person name="Saint R.B."/>
            <person name="Favaloro J."/>
            <person name="Crewther P.E."/>
            <person name="Stahl H.-D."/>
            <person name="Bianco A.E."/>
            <person name="Brown G.V."/>
            <person name="Anders R.F."/>
            <person name="Kemp D.J."/>
        </authorList>
    </citation>
    <scope>NUCLEOTIDE SEQUENCE [MRNA]</scope>
</reference>
<proteinExistence type="evidence at transcript level"/>
<accession>P13831</accession>
<evidence type="ECO:0000255" key="1"/>
<evidence type="ECO:0000255" key="2">
    <source>
        <dbReference type="PROSITE-ProRule" id="PRU00286"/>
    </source>
</evidence>
<evidence type="ECO:0000256" key="3">
    <source>
        <dbReference type="SAM" id="MobiDB-lite"/>
    </source>
</evidence>
<sequence>EFRYSQYKVQYDMPKEAYESKWTQCIKLIDQGGENLEERLNSQFKNWYRQKYLNLEEYRRLTVLNQIAWKALSNQIQYSCRKIMNSDISSFKHINELKSLEHRAAKAAEAEMKKRAQKPKKKKSRRGWLCCGGGDIETVEPQQEEPVQTVQEQQVNEYGDILPTLRASITNSAINYYDTVKDGVYLDHETSDALYTDEDLLFDLEKQKYMDMLDTSQEESVEENEEEHTVDDEHVEEHTADDEHVEEPTVADDEHVEEPTVADEHVEEPTVAEEHVEEPTVAEEHVEEPASDVQQTSEAAPTIEIPDTLYYDILGVGVNADMNEITERYFKLAENYYPYQRSGSTVFHNFRKVNEAYQVLGDIDKKRWYNKYGYDGIKQVNFMNPSIFYLLSSLEKFKDFTGTPQIVTLLRFFFEKRLSMNDLENKSEHLLKFMEQYQKEREAHVSEYLLNILQPCIAGDSKWNVPIITKLEGLKGSRFDIPILESLRWIFKHVAKTHLKKSSKSAKKLQQRTQANKQELANINNNLMSTLKEYLGSSEQMNSITYNFENINSNVDNGNQSKNISDLSYTDQKEILEKIVSYIVDISLYDIENTALNAAEQLLSDNSVDEKTLKKRAQSLKKLSSIMERYAGGKRNDKKAKKYDTQDVVGYIMHGISTINKEMKNQNENVPEHVQHNAEANVEHDAEENVEHDAEENAEENVEENVEEVEENVEENVEENVGEKKMRREEKKKRVQEPIKIDEIQVYDIIKNEKKKKTEF</sequence>
<protein>
    <recommendedName>
        <fullName>Ring-infected erythrocyte surface antigen</fullName>
    </recommendedName>
</protein>
<gene>
    <name type="primary">RESA</name>
</gene>
<name>RESA_PLAFN</name>
<comment type="function">
    <text>May disrupt the normal intermolecular interactions of the cytoplasmic domain of band 3 and thereby facilitate the invagination of the red cell membrane which is necessary for the formation of the parasitophorous vacuole.</text>
</comment>
<comment type="subcellular location">
    <subcellularLocation>
        <location>Cell membrane</location>
        <topology>Peripheral membrane protein</topology>
        <orientation>Cytoplasmic side</orientation>
    </subcellularLocation>
    <text>Probably located on the cytoplasmic face of the membrane where it associates with components of the membrane skeleton.</text>
</comment>
<keyword id="KW-1003">Cell membrane</keyword>
<keyword id="KW-0325">Glycoprotein</keyword>
<keyword id="KW-0461">Malaria</keyword>
<keyword id="KW-0472">Membrane</keyword>
<feature type="chain" id="PRO_0000071160" description="Ring-infected erythrocyte surface antigen">
    <location>
        <begin position="1" status="less than"/>
        <end position="760" status="greater than"/>
    </location>
</feature>
<feature type="domain" description="J" evidence="2">
    <location>
        <begin position="307"/>
        <end position="375"/>
    </location>
</feature>
<feature type="region of interest" description="Disordered" evidence="3">
    <location>
        <begin position="214"/>
        <end position="300"/>
    </location>
</feature>
<feature type="region of interest" description="Disordered" evidence="3">
    <location>
        <begin position="683"/>
        <end position="738"/>
    </location>
</feature>
<feature type="compositionally biased region" description="Acidic residues" evidence="3">
    <location>
        <begin position="216"/>
        <end position="230"/>
    </location>
</feature>
<feature type="compositionally biased region" description="Basic and acidic residues" evidence="3">
    <location>
        <begin position="231"/>
        <end position="242"/>
    </location>
</feature>
<feature type="compositionally biased region" description="Acidic residues" evidence="3">
    <location>
        <begin position="243"/>
        <end position="256"/>
    </location>
</feature>
<feature type="compositionally biased region" description="Basic and acidic residues" evidence="3">
    <location>
        <begin position="262"/>
        <end position="288"/>
    </location>
</feature>
<feature type="compositionally biased region" description="Basic and acidic residues" evidence="3">
    <location>
        <begin position="683"/>
        <end position="692"/>
    </location>
</feature>
<feature type="compositionally biased region" description="Acidic residues" evidence="3">
    <location>
        <begin position="693"/>
        <end position="720"/>
    </location>
</feature>
<feature type="glycosylation site" description="N-linked (GlcNAc...) asparagine" evidence="1">
    <location>
        <position position="425"/>
    </location>
</feature>
<feature type="glycosylation site" description="N-linked (GlcNAc...) asparagine" evidence="1">
    <location>
        <position position="559"/>
    </location>
</feature>
<feature type="glycosylation site" description="N-linked (GlcNAc...) asparagine" evidence="1">
    <location>
        <position position="563"/>
    </location>
</feature>
<feature type="non-terminal residue">
    <location>
        <position position="1"/>
    </location>
</feature>
<feature type="non-terminal residue">
    <location>
        <position position="760"/>
    </location>
</feature>
<organism>
    <name type="scientific">Plasmodium falciparum (isolate NF7 / Ghana)</name>
    <dbReference type="NCBI Taxonomy" id="5842"/>
    <lineage>
        <taxon>Eukaryota</taxon>
        <taxon>Sar</taxon>
        <taxon>Alveolata</taxon>
        <taxon>Apicomplexa</taxon>
        <taxon>Aconoidasida</taxon>
        <taxon>Haemosporida</taxon>
        <taxon>Plasmodiidae</taxon>
        <taxon>Plasmodium</taxon>
        <taxon>Plasmodium (Laverania)</taxon>
    </lineage>
</organism>